<feature type="chain" id="PRO_0000179135" description="Phosphate acetyltransferase">
    <location>
        <begin position="1"/>
        <end position="690"/>
    </location>
</feature>
<feature type="region of interest" description="Phosphate acetyltransferase">
    <location>
        <begin position="365"/>
        <end position="690"/>
    </location>
</feature>
<name>PTA_MYCTU</name>
<keyword id="KW-0012">Acyltransferase</keyword>
<keyword id="KW-0963">Cytoplasm</keyword>
<keyword id="KW-1185">Reference proteome</keyword>
<keyword id="KW-0808">Transferase</keyword>
<organism>
    <name type="scientific">Mycobacterium tuberculosis (strain ATCC 25618 / H37Rv)</name>
    <dbReference type="NCBI Taxonomy" id="83332"/>
    <lineage>
        <taxon>Bacteria</taxon>
        <taxon>Bacillati</taxon>
        <taxon>Actinomycetota</taxon>
        <taxon>Actinomycetes</taxon>
        <taxon>Mycobacteriales</taxon>
        <taxon>Mycobacteriaceae</taxon>
        <taxon>Mycobacterium</taxon>
        <taxon>Mycobacterium tuberculosis complex</taxon>
    </lineage>
</organism>
<proteinExistence type="evidence at protein level"/>
<sequence>MADSSAIYLAAPESQTGKSTIALGLLHRLTAMVAKVGVFRPITRLSAERDYILELLLAHTSAGLPYERCVGVTYQQLHADRDDAIAEIVDSYHAMADECDAVVVVGSDYTDVTSPTELSVNGRIAVNLGAPVLLTVRAKDRTPDQVASVVEVCLAELDTQRAHTAAVVANRCELSAIPAVTDALRRFTPPSYVVPEEPLLSAPTVAELTQAVNGAVVSGDVALREREVMGVLAAGMTADHVLERLTDGMAVITPGDRSDVVLAVASAHAAEGFPSLSCIVLNGGFQLHPAIAALVSGLRLRLPVIATALGTYDTASAAASARGLVTATSQRKIDTALELMDRHVDVAGLLAQLTIPIPTVTTPQMFTYRLLQQARSDLMRIVLPEGDDDRILKSAGRLLQRGIVDLTILGDEAKVRLRAAELGVDLDGATVIEPCASELHDQFADQYAQLRKAKGITVEHAREIMNDATYFGTMLVHNCHADGMVSGAAHTTAHTVRPALEIIKTVPGISTVSSIFLMCLPDRVLAYGDCAIIPNPTVEQLADIAICSARTAAQFGIEPRVAMLSYSTGDSGKGADVDKVRAATELVRAREPQLPVEGPIQYDAAVEPSVAATKLRDSPVAGRATVLIFPDLNTGNNTYKAVQRSAGAIAIGPVLQGLRKPVNDLSRGALVDDIVNTVAITAIQAQGVHE</sequence>
<evidence type="ECO:0000250" key="1"/>
<evidence type="ECO:0000305" key="2"/>
<reference key="1">
    <citation type="journal article" date="1998" name="Nature">
        <title>Deciphering the biology of Mycobacterium tuberculosis from the complete genome sequence.</title>
        <authorList>
            <person name="Cole S.T."/>
            <person name="Brosch R."/>
            <person name="Parkhill J."/>
            <person name="Garnier T."/>
            <person name="Churcher C.M."/>
            <person name="Harris D.E."/>
            <person name="Gordon S.V."/>
            <person name="Eiglmeier K."/>
            <person name="Gas S."/>
            <person name="Barry C.E. III"/>
            <person name="Tekaia F."/>
            <person name="Badcock K."/>
            <person name="Basham D."/>
            <person name="Brown D."/>
            <person name="Chillingworth T."/>
            <person name="Connor R."/>
            <person name="Davies R.M."/>
            <person name="Devlin K."/>
            <person name="Feltwell T."/>
            <person name="Gentles S."/>
            <person name="Hamlin N."/>
            <person name="Holroyd S."/>
            <person name="Hornsby T."/>
            <person name="Jagels K."/>
            <person name="Krogh A."/>
            <person name="McLean J."/>
            <person name="Moule S."/>
            <person name="Murphy L.D."/>
            <person name="Oliver S."/>
            <person name="Osborne J."/>
            <person name="Quail M.A."/>
            <person name="Rajandream M.A."/>
            <person name="Rogers J."/>
            <person name="Rutter S."/>
            <person name="Seeger K."/>
            <person name="Skelton S."/>
            <person name="Squares S."/>
            <person name="Squares R."/>
            <person name="Sulston J.E."/>
            <person name="Taylor K."/>
            <person name="Whitehead S."/>
            <person name="Barrell B.G."/>
        </authorList>
    </citation>
    <scope>NUCLEOTIDE SEQUENCE [LARGE SCALE GENOMIC DNA]</scope>
    <source>
        <strain>ATCC 25618 / H37Rv</strain>
    </source>
</reference>
<reference key="2">
    <citation type="journal article" date="2011" name="Mol. Cell. Proteomics">
        <title>Proteogenomic analysis of Mycobacterium tuberculosis by high resolution mass spectrometry.</title>
        <authorList>
            <person name="Kelkar D.S."/>
            <person name="Kumar D."/>
            <person name="Kumar P."/>
            <person name="Balakrishnan L."/>
            <person name="Muthusamy B."/>
            <person name="Yadav A.K."/>
            <person name="Shrivastava P."/>
            <person name="Marimuthu A."/>
            <person name="Anand S."/>
            <person name="Sundaram H."/>
            <person name="Kingsbury R."/>
            <person name="Harsha H.C."/>
            <person name="Nair B."/>
            <person name="Prasad T.S."/>
            <person name="Chauhan D.S."/>
            <person name="Katoch K."/>
            <person name="Katoch V.M."/>
            <person name="Kumar P."/>
            <person name="Chaerkady R."/>
            <person name="Ramachandran S."/>
            <person name="Dash D."/>
            <person name="Pandey A."/>
        </authorList>
    </citation>
    <scope>IDENTIFICATION BY MASS SPECTROMETRY [LARGE SCALE ANALYSIS]</scope>
    <source>
        <strain>ATCC 25618 / H37Rv</strain>
    </source>
</reference>
<dbReference type="EC" id="2.3.1.8"/>
<dbReference type="EMBL" id="AL123456">
    <property type="protein sequence ID" value="CCP43139.1"/>
    <property type="molecule type" value="Genomic_DNA"/>
</dbReference>
<dbReference type="PIR" id="F70628">
    <property type="entry name" value="F70628"/>
</dbReference>
<dbReference type="RefSeq" id="NP_214922.1">
    <property type="nucleotide sequence ID" value="NC_000962.3"/>
</dbReference>
<dbReference type="RefSeq" id="WP_003898439.1">
    <property type="nucleotide sequence ID" value="NZ_NVQJ01000002.1"/>
</dbReference>
<dbReference type="SMR" id="P9WHP1"/>
<dbReference type="FunCoup" id="P9WHP1">
    <property type="interactions" value="119"/>
</dbReference>
<dbReference type="STRING" id="83332.Rv0408"/>
<dbReference type="PaxDb" id="83332-Rv0408"/>
<dbReference type="DNASU" id="886401"/>
<dbReference type="GeneID" id="886401"/>
<dbReference type="KEGG" id="mtu:Rv0408"/>
<dbReference type="KEGG" id="mtv:RVBD_0408"/>
<dbReference type="TubercuList" id="Rv0408"/>
<dbReference type="eggNOG" id="COG0280">
    <property type="taxonomic scope" value="Bacteria"/>
</dbReference>
<dbReference type="eggNOG" id="COG0857">
    <property type="taxonomic scope" value="Bacteria"/>
</dbReference>
<dbReference type="InParanoid" id="P9WHP1"/>
<dbReference type="OrthoDB" id="9808984at2"/>
<dbReference type="PhylomeDB" id="P9WHP1"/>
<dbReference type="UniPathway" id="UPA00340">
    <property type="reaction ID" value="UER00459"/>
</dbReference>
<dbReference type="Proteomes" id="UP000001584">
    <property type="component" value="Chromosome"/>
</dbReference>
<dbReference type="GO" id="GO:0005737">
    <property type="term" value="C:cytoplasm"/>
    <property type="evidence" value="ECO:0007669"/>
    <property type="project" value="UniProtKB-SubCell"/>
</dbReference>
<dbReference type="GO" id="GO:0005576">
    <property type="term" value="C:extracellular region"/>
    <property type="evidence" value="ECO:0007005"/>
    <property type="project" value="MTBBASE"/>
</dbReference>
<dbReference type="GO" id="GO:0008959">
    <property type="term" value="F:phosphate acetyltransferase activity"/>
    <property type="evidence" value="ECO:0007669"/>
    <property type="project" value="UniProtKB-EC"/>
</dbReference>
<dbReference type="GO" id="GO:0006085">
    <property type="term" value="P:acetyl-CoA biosynthetic process"/>
    <property type="evidence" value="ECO:0007669"/>
    <property type="project" value="UniProtKB-UniPathway"/>
</dbReference>
<dbReference type="FunFam" id="3.40.50.10750:FF:000001">
    <property type="entry name" value="Phosphate acetyltransferase"/>
    <property type="match status" value="1"/>
</dbReference>
<dbReference type="Gene3D" id="3.40.50.10950">
    <property type="match status" value="1"/>
</dbReference>
<dbReference type="Gene3D" id="3.40.1390.20">
    <property type="entry name" value="HprK N-terminal domain-like"/>
    <property type="match status" value="1"/>
</dbReference>
<dbReference type="Gene3D" id="3.40.50.10750">
    <property type="entry name" value="Isocitrate/Isopropylmalate dehydrogenase-like"/>
    <property type="match status" value="1"/>
</dbReference>
<dbReference type="Gene3D" id="3.40.50.300">
    <property type="entry name" value="P-loop containing nucleotide triphosphate hydrolases"/>
    <property type="match status" value="1"/>
</dbReference>
<dbReference type="InterPro" id="IPR010766">
    <property type="entry name" value="DRTGG"/>
</dbReference>
<dbReference type="InterPro" id="IPR016475">
    <property type="entry name" value="P-Actrans_bac"/>
</dbReference>
<dbReference type="InterPro" id="IPR027417">
    <property type="entry name" value="P-loop_NTPase"/>
</dbReference>
<dbReference type="InterPro" id="IPR004614">
    <property type="entry name" value="P_AcTrfase"/>
</dbReference>
<dbReference type="InterPro" id="IPR042113">
    <property type="entry name" value="P_AcTrfase_dom1"/>
</dbReference>
<dbReference type="InterPro" id="IPR042112">
    <property type="entry name" value="P_AcTrfase_dom2"/>
</dbReference>
<dbReference type="InterPro" id="IPR050500">
    <property type="entry name" value="Phos_Acetyltrans/Butyryltrans"/>
</dbReference>
<dbReference type="InterPro" id="IPR002505">
    <property type="entry name" value="PTA_PTB"/>
</dbReference>
<dbReference type="InterPro" id="IPR028979">
    <property type="entry name" value="Ser_kin/Pase_Hpr-like_N_sf"/>
</dbReference>
<dbReference type="NCBIfam" id="NF004167">
    <property type="entry name" value="PRK05632.1"/>
    <property type="match status" value="1"/>
</dbReference>
<dbReference type="NCBIfam" id="NF007233">
    <property type="entry name" value="PRK09653.1"/>
    <property type="match status" value="1"/>
</dbReference>
<dbReference type="NCBIfam" id="TIGR00651">
    <property type="entry name" value="pta"/>
    <property type="match status" value="1"/>
</dbReference>
<dbReference type="PANTHER" id="PTHR43356">
    <property type="entry name" value="PHOSPHATE ACETYLTRANSFERASE"/>
    <property type="match status" value="1"/>
</dbReference>
<dbReference type="PANTHER" id="PTHR43356:SF3">
    <property type="entry name" value="PHOSPHATE ACETYLTRANSFERASE"/>
    <property type="match status" value="1"/>
</dbReference>
<dbReference type="Pfam" id="PF13500">
    <property type="entry name" value="AAA_26"/>
    <property type="match status" value="1"/>
</dbReference>
<dbReference type="Pfam" id="PF07085">
    <property type="entry name" value="DRTGG"/>
    <property type="match status" value="1"/>
</dbReference>
<dbReference type="Pfam" id="PF01515">
    <property type="entry name" value="PTA_PTB"/>
    <property type="match status" value="1"/>
</dbReference>
<dbReference type="PIRSF" id="PIRSF006107">
    <property type="entry name" value="PhpActrans_proteobac"/>
    <property type="match status" value="1"/>
</dbReference>
<dbReference type="SUPFAM" id="SSF75138">
    <property type="entry name" value="HprK N-terminal domain-like"/>
    <property type="match status" value="1"/>
</dbReference>
<dbReference type="SUPFAM" id="SSF53659">
    <property type="entry name" value="Isocitrate/Isopropylmalate dehydrogenase-like"/>
    <property type="match status" value="1"/>
</dbReference>
<dbReference type="SUPFAM" id="SSF52540">
    <property type="entry name" value="P-loop containing nucleoside triphosphate hydrolases"/>
    <property type="match status" value="1"/>
</dbReference>
<gene>
    <name type="primary">pta</name>
    <name type="ordered locus">Rv0408</name>
    <name type="ORF">MTCY22G10.04</name>
</gene>
<comment type="function">
    <text evidence="1">Involved in acetate metabolism.</text>
</comment>
<comment type="catalytic activity">
    <reaction>
        <text>acetyl-CoA + phosphate = acetyl phosphate + CoA</text>
        <dbReference type="Rhea" id="RHEA:19521"/>
        <dbReference type="ChEBI" id="CHEBI:22191"/>
        <dbReference type="ChEBI" id="CHEBI:43474"/>
        <dbReference type="ChEBI" id="CHEBI:57287"/>
        <dbReference type="ChEBI" id="CHEBI:57288"/>
        <dbReference type="EC" id="2.3.1.8"/>
    </reaction>
</comment>
<comment type="pathway">
    <text>Metabolic intermediate biosynthesis; acetyl-CoA biosynthesis; acetyl-CoA from acetate: step 2/2.</text>
</comment>
<comment type="subcellular location">
    <subcellularLocation>
        <location evidence="2">Cytoplasm</location>
    </subcellularLocation>
</comment>
<comment type="domain">
    <text evidence="1">The N-terminal region seems to be important for proper quaternary structure. The C-terminal region contains the substrate-binding site (By similarity).</text>
</comment>
<comment type="similarity">
    <text evidence="2">In the N-terminal section; belongs to the CobB/CobQ family.</text>
</comment>
<comment type="similarity">
    <text evidence="2">In the C-terminal section; belongs to the phosphate acetyltransferase and butyryltransferase family.</text>
</comment>
<protein>
    <recommendedName>
        <fullName>Phosphate acetyltransferase</fullName>
        <ecNumber>2.3.1.8</ecNumber>
    </recommendedName>
    <alternativeName>
        <fullName>Phosphotransacetylase</fullName>
    </alternativeName>
</protein>
<accession>P9WHP1</accession>
<accession>L0T5A1</accession>
<accession>P96254</accession>